<protein>
    <recommendedName>
        <fullName evidence="1">Probable transcriptional regulatory protein LPC_0711</fullName>
    </recommendedName>
</protein>
<gene>
    <name type="ordered locus">LPC_0711</name>
</gene>
<proteinExistence type="inferred from homology"/>
<feature type="chain" id="PRO_1000045329" description="Probable transcriptional regulatory protein LPC_0711">
    <location>
        <begin position="1"/>
        <end position="247"/>
    </location>
</feature>
<dbReference type="EMBL" id="CP000675">
    <property type="protein sequence ID" value="ABQ54689.1"/>
    <property type="molecule type" value="Genomic_DNA"/>
</dbReference>
<dbReference type="RefSeq" id="WP_011946341.1">
    <property type="nucleotide sequence ID" value="NZ_JAPMSS010000002.1"/>
</dbReference>
<dbReference type="SMR" id="A5IBD9"/>
<dbReference type="KEGG" id="lpc:LPC_0711"/>
<dbReference type="HOGENOM" id="CLU_062974_2_2_6"/>
<dbReference type="GO" id="GO:0005829">
    <property type="term" value="C:cytosol"/>
    <property type="evidence" value="ECO:0007669"/>
    <property type="project" value="TreeGrafter"/>
</dbReference>
<dbReference type="GO" id="GO:0003677">
    <property type="term" value="F:DNA binding"/>
    <property type="evidence" value="ECO:0007669"/>
    <property type="project" value="UniProtKB-UniRule"/>
</dbReference>
<dbReference type="GO" id="GO:0006355">
    <property type="term" value="P:regulation of DNA-templated transcription"/>
    <property type="evidence" value="ECO:0007669"/>
    <property type="project" value="UniProtKB-UniRule"/>
</dbReference>
<dbReference type="FunFam" id="1.10.10.200:FF:000002">
    <property type="entry name" value="Probable transcriptional regulatory protein CLM62_37755"/>
    <property type="match status" value="1"/>
</dbReference>
<dbReference type="Gene3D" id="1.10.10.200">
    <property type="match status" value="1"/>
</dbReference>
<dbReference type="Gene3D" id="3.30.70.980">
    <property type="match status" value="2"/>
</dbReference>
<dbReference type="HAMAP" id="MF_00693">
    <property type="entry name" value="Transcrip_reg_TACO1"/>
    <property type="match status" value="1"/>
</dbReference>
<dbReference type="InterPro" id="IPR017856">
    <property type="entry name" value="Integrase-like_N"/>
</dbReference>
<dbReference type="InterPro" id="IPR048300">
    <property type="entry name" value="TACO1_YebC-like_2nd/3rd_dom"/>
</dbReference>
<dbReference type="InterPro" id="IPR049083">
    <property type="entry name" value="TACO1_YebC_N"/>
</dbReference>
<dbReference type="InterPro" id="IPR002876">
    <property type="entry name" value="Transcrip_reg_TACO1-like"/>
</dbReference>
<dbReference type="InterPro" id="IPR026564">
    <property type="entry name" value="Transcrip_reg_TACO1-like_dom3"/>
</dbReference>
<dbReference type="InterPro" id="IPR029072">
    <property type="entry name" value="YebC-like"/>
</dbReference>
<dbReference type="NCBIfam" id="NF001030">
    <property type="entry name" value="PRK00110.1"/>
    <property type="match status" value="1"/>
</dbReference>
<dbReference type="NCBIfam" id="NF009044">
    <property type="entry name" value="PRK12378.1"/>
    <property type="match status" value="1"/>
</dbReference>
<dbReference type="NCBIfam" id="TIGR01033">
    <property type="entry name" value="YebC/PmpR family DNA-binding transcriptional regulator"/>
    <property type="match status" value="1"/>
</dbReference>
<dbReference type="PANTHER" id="PTHR12532:SF6">
    <property type="entry name" value="TRANSCRIPTIONAL REGULATORY PROTEIN YEBC-RELATED"/>
    <property type="match status" value="1"/>
</dbReference>
<dbReference type="PANTHER" id="PTHR12532">
    <property type="entry name" value="TRANSLATIONAL ACTIVATOR OF CYTOCHROME C OXIDASE 1"/>
    <property type="match status" value="1"/>
</dbReference>
<dbReference type="Pfam" id="PF20772">
    <property type="entry name" value="TACO1_YebC_N"/>
    <property type="match status" value="1"/>
</dbReference>
<dbReference type="Pfam" id="PF01709">
    <property type="entry name" value="Transcrip_reg"/>
    <property type="match status" value="1"/>
</dbReference>
<dbReference type="SUPFAM" id="SSF75625">
    <property type="entry name" value="YebC-like"/>
    <property type="match status" value="1"/>
</dbReference>
<sequence length="247" mass="26814">MAGHSKWANIKFRKGVQDAKRGKIFTKLIREITVAARMGGGDESSNPRLRDAVKKALNANMKRDTIDNAVKRGVGGADGEAMIAMRYEGYGPGGVAILVDCLSDNKNRTVSEVRHAFSKHGGNLGTDGSVSYLFTNQGEILMASNQPEDKVMEIAIDAGASDVAVEDSQVEIITPVEAYHTVLNALQDAGLEVEQSHLTMRAQTLVPISDETAESLIKLIDMLEDLDDVQEVYSNAEFSEKILESMN</sequence>
<keyword id="KW-0963">Cytoplasm</keyword>
<keyword id="KW-0238">DNA-binding</keyword>
<keyword id="KW-0804">Transcription</keyword>
<keyword id="KW-0805">Transcription regulation</keyword>
<accession>A5IBD9</accession>
<name>Y711_LEGPC</name>
<reference key="1">
    <citation type="submission" date="2006-11" db="EMBL/GenBank/DDBJ databases">
        <title>Identification and characterization of a new conjugation/ type IVA secretion system (trb/tra) of L. pneumophila Corby localized on a mobile genomic island.</title>
        <authorList>
            <person name="Gloeckner G."/>
            <person name="Albert-Weissenberger C."/>
            <person name="Weinmann E."/>
            <person name="Jacobi S."/>
            <person name="Schunder E."/>
            <person name="Steinert M."/>
            <person name="Buchrieser C."/>
            <person name="Hacker J."/>
            <person name="Heuner K."/>
        </authorList>
    </citation>
    <scope>NUCLEOTIDE SEQUENCE [LARGE SCALE GENOMIC DNA]</scope>
    <source>
        <strain>Corby</strain>
    </source>
</reference>
<evidence type="ECO:0000255" key="1">
    <source>
        <dbReference type="HAMAP-Rule" id="MF_00693"/>
    </source>
</evidence>
<organism>
    <name type="scientific">Legionella pneumophila (strain Corby)</name>
    <dbReference type="NCBI Taxonomy" id="400673"/>
    <lineage>
        <taxon>Bacteria</taxon>
        <taxon>Pseudomonadati</taxon>
        <taxon>Pseudomonadota</taxon>
        <taxon>Gammaproteobacteria</taxon>
        <taxon>Legionellales</taxon>
        <taxon>Legionellaceae</taxon>
        <taxon>Legionella</taxon>
    </lineage>
</organism>
<comment type="subcellular location">
    <subcellularLocation>
        <location evidence="1">Cytoplasm</location>
    </subcellularLocation>
</comment>
<comment type="similarity">
    <text evidence="1">Belongs to the TACO1 family.</text>
</comment>